<feature type="signal peptide" evidence="2">
    <location>
        <begin position="1"/>
        <end position="20"/>
    </location>
</feature>
<feature type="chain" id="PRO_0000408390" description="Secreted protein BARF1">
    <location>
        <begin position="21"/>
        <end position="221"/>
    </location>
</feature>
<feature type="domain" description="Ig-like 1">
    <location>
        <begin position="21"/>
        <end position="120"/>
    </location>
</feature>
<feature type="domain" description="Ig-like 2">
    <location>
        <begin position="124"/>
        <end position="220"/>
    </location>
</feature>
<feature type="glycosylation site" description="N-linked (GlcNAc...) asparagine; by host">
    <location>
        <position position="95"/>
    </location>
</feature>
<feature type="disulfide bond" evidence="3">
    <location>
        <begin position="146"/>
        <end position="201"/>
    </location>
</feature>
<feature type="strand" evidence="4">
    <location>
        <begin position="22"/>
        <end position="24"/>
    </location>
</feature>
<feature type="strand" evidence="4">
    <location>
        <begin position="29"/>
        <end position="34"/>
    </location>
</feature>
<feature type="strand" evidence="4">
    <location>
        <begin position="44"/>
        <end position="52"/>
    </location>
</feature>
<feature type="turn" evidence="4">
    <location>
        <begin position="53"/>
        <end position="55"/>
    </location>
</feature>
<feature type="strand" evidence="4">
    <location>
        <begin position="56"/>
        <end position="64"/>
    </location>
</feature>
<feature type="strand" evidence="4">
    <location>
        <begin position="67"/>
        <end position="70"/>
    </location>
</feature>
<feature type="helix" evidence="4">
    <location>
        <begin position="72"/>
        <end position="74"/>
    </location>
</feature>
<feature type="strand" evidence="4">
    <location>
        <begin position="78"/>
        <end position="83"/>
    </location>
</feature>
<feature type="strand" evidence="4">
    <location>
        <begin position="86"/>
        <end position="93"/>
    </location>
</feature>
<feature type="helix" evidence="4">
    <location>
        <begin position="96"/>
        <end position="98"/>
    </location>
</feature>
<feature type="strand" evidence="4">
    <location>
        <begin position="100"/>
        <end position="108"/>
    </location>
</feature>
<feature type="strand" evidence="4">
    <location>
        <begin position="111"/>
        <end position="133"/>
    </location>
</feature>
<feature type="strand" evidence="4">
    <location>
        <begin position="142"/>
        <end position="152"/>
    </location>
</feature>
<feature type="strand" evidence="4">
    <location>
        <begin position="155"/>
        <end position="158"/>
    </location>
</feature>
<feature type="strand" evidence="4">
    <location>
        <begin position="183"/>
        <end position="191"/>
    </location>
</feature>
<feature type="strand" evidence="4">
    <location>
        <begin position="199"/>
        <end position="207"/>
    </location>
</feature>
<feature type="strand" evidence="4">
    <location>
        <begin position="209"/>
        <end position="216"/>
    </location>
</feature>
<proteinExistence type="evidence at protein level"/>
<gene>
    <name type="primary">BARF1</name>
</gene>
<dbReference type="EMBL" id="AY961628">
    <property type="protein sequence ID" value="AAY41158.1"/>
    <property type="molecule type" value="Genomic_DNA"/>
</dbReference>
<dbReference type="RefSeq" id="YP_401719.1">
    <property type="nucleotide sequence ID" value="NC_007605.1"/>
</dbReference>
<dbReference type="PDB" id="4FA8">
    <property type="method" value="X-ray"/>
    <property type="resolution" value="2.20 A"/>
    <property type="chains" value="A/B/D=19-221"/>
</dbReference>
<dbReference type="PDBsum" id="4FA8"/>
<dbReference type="SMR" id="P0CW72"/>
<dbReference type="DIP" id="DIP-60066N"/>
<dbReference type="IntAct" id="P0CW72">
    <property type="interactions" value="5"/>
</dbReference>
<dbReference type="GlyCosmos" id="P0CW72">
    <property type="glycosylation" value="1 site, No reported glycans"/>
</dbReference>
<dbReference type="DNASU" id="3783772"/>
<dbReference type="GeneID" id="3783772"/>
<dbReference type="KEGG" id="vg:3783772"/>
<dbReference type="Proteomes" id="UP000007641">
    <property type="component" value="Genome"/>
</dbReference>
<dbReference type="GO" id="GO:0005576">
    <property type="term" value="C:extracellular region"/>
    <property type="evidence" value="ECO:0007669"/>
    <property type="project" value="UniProtKB-SubCell"/>
</dbReference>
<dbReference type="GO" id="GO:0042802">
    <property type="term" value="F:identical protein binding"/>
    <property type="evidence" value="ECO:0000353"/>
    <property type="project" value="IntAct"/>
</dbReference>
<dbReference type="Gene3D" id="2.60.40.10">
    <property type="entry name" value="Immunoglobulins"/>
    <property type="match status" value="2"/>
</dbReference>
<dbReference type="InterPro" id="IPR054777">
    <property type="entry name" value="BARF1_Ig_2"/>
</dbReference>
<dbReference type="InterPro" id="IPR007110">
    <property type="entry name" value="Ig-like_dom"/>
</dbReference>
<dbReference type="InterPro" id="IPR036179">
    <property type="entry name" value="Ig-like_dom_sf"/>
</dbReference>
<dbReference type="InterPro" id="IPR013783">
    <property type="entry name" value="Ig-like_fold"/>
</dbReference>
<dbReference type="Pfam" id="PF22305">
    <property type="entry name" value="BARF1_ig2"/>
    <property type="match status" value="1"/>
</dbReference>
<dbReference type="SUPFAM" id="SSF48726">
    <property type="entry name" value="Immunoglobulin"/>
    <property type="match status" value="2"/>
</dbReference>
<dbReference type="PROSITE" id="PS50835">
    <property type="entry name" value="IG_LIKE"/>
    <property type="match status" value="1"/>
</dbReference>
<sequence>MARFIAQLLLLASCVAAGQAVTAFLGERVTLTSYWRRVSLGPEIEVSWFKLGPGEEQVLIGRMHHDVIFIEWPFRGFFDIHRSANTFFLVVTAANISHDGNYLCRMKLGETEVTKQEHLSVVKPLTLSVHSERSQFPDFSVLTVTCTVNAFPHPHVQWLMPEGVEPAPTAANGGVMKEKDGSLSVAVDLSLPKPWHLPVTCVGKNDKEEAHGVYVSGYLSQ</sequence>
<keyword id="KW-0002">3D-structure</keyword>
<keyword id="KW-1015">Disulfide bond</keyword>
<keyword id="KW-0244">Early protein</keyword>
<keyword id="KW-0325">Glycoprotein</keyword>
<keyword id="KW-0393">Immunoglobulin domain</keyword>
<keyword id="KW-0553">Oncogene</keyword>
<keyword id="KW-0677">Repeat</keyword>
<keyword id="KW-0964">Secreted</keyword>
<keyword id="KW-0732">Signal</keyword>
<evidence type="ECO:0000250" key="1"/>
<evidence type="ECO:0000255" key="2"/>
<evidence type="ECO:0000255" key="3">
    <source>
        <dbReference type="PROSITE-ProRule" id="PRU00114"/>
    </source>
</evidence>
<evidence type="ECO:0007829" key="4">
    <source>
        <dbReference type="PDB" id="4FA8"/>
    </source>
</evidence>
<protein>
    <recommendedName>
        <fullName>Secreted protein BARF1</fullName>
    </recommendedName>
    <alternativeName>
        <fullName>33 kDa early protein</fullName>
    </alternativeName>
    <alternativeName>
        <fullName>p33</fullName>
    </alternativeName>
</protein>
<name>BARF1_EBVG</name>
<reference key="1">
    <citation type="journal article" date="2005" name="J. Virol.">
        <title>Genomic sequence analysis of Epstein-Barr virus strain GD1 from a nasopharyngeal carcinoma patient.</title>
        <authorList>
            <person name="Zeng M.-S."/>
            <person name="Li D.-J."/>
            <person name="Liu Q.-L."/>
            <person name="Song L.-B."/>
            <person name="Li M.-Z."/>
            <person name="Zhang R.-H."/>
            <person name="Yu X.-J."/>
            <person name="Wang H.-M."/>
            <person name="Ernberg I."/>
            <person name="Zeng Y.-X."/>
        </authorList>
    </citation>
    <scope>NUCLEOTIDE SEQUENCE [LARGE SCALE GENOMIC DNA]</scope>
</reference>
<organism>
    <name type="scientific">Epstein-Barr virus (strain GD1)</name>
    <name type="common">HHV-4</name>
    <name type="synonym">Human gammaherpesvirus 4</name>
    <dbReference type="NCBI Taxonomy" id="10376"/>
    <lineage>
        <taxon>Viruses</taxon>
        <taxon>Duplodnaviria</taxon>
        <taxon>Heunggongvirae</taxon>
        <taxon>Peploviricota</taxon>
        <taxon>Herviviricetes</taxon>
        <taxon>Herpesvirales</taxon>
        <taxon>Orthoherpesviridae</taxon>
        <taxon>Gammaherpesvirinae</taxon>
        <taxon>Lymphocryptovirus</taxon>
        <taxon>Lymphocryptovirus humangamma4</taxon>
    </lineage>
</organism>
<accession>P0CW72</accession>
<accession>Q777A5</accession>
<comment type="function">
    <text evidence="1">Plays diverse functions in immunomodulation and oncogenicity, maybe by acting as a functional receptor for human CSF1. May inhibit interferon secretion from mononuclear cells. Exhibits oncogenic activity in vitro (By similarity).</text>
</comment>
<comment type="subunit">
    <text evidence="1">Homohexamer. Interacts with human CSF1 (By similarity).</text>
</comment>
<comment type="interaction">
    <interactant intactId="EBI-2620133">
        <id>P0CW72</id>
    </interactant>
    <interactant intactId="EBI-2620133">
        <id>P0CW72</id>
        <label>BARF1</label>
    </interactant>
    <organismsDiffer>false</organismsDiffer>
    <experiments>2</experiments>
</comment>
<comment type="interaction">
    <interactant intactId="EBI-2620133">
        <id>P0CW72</id>
    </interactant>
    <interactant intactId="EBI-2872294">
        <id>P09603</id>
        <label>CSF1</label>
    </interactant>
    <organismsDiffer>true</organismsDiffer>
    <experiments>3</experiments>
</comment>
<comment type="subcellular location">
    <subcellularLocation>
        <location>Secreted</location>
    </subcellularLocation>
    <text evidence="1">Massively secreted in the serum of EBV-induced nasophyryngeal carcinoma patients.</text>
</comment>
<comment type="PTM">
    <text evidence="1">Phosphorylated on serine and threonine by host.</text>
</comment>
<organismHost>
    <name type="scientific">Homo sapiens</name>
    <name type="common">Human</name>
    <dbReference type="NCBI Taxonomy" id="9606"/>
</organismHost>